<evidence type="ECO:0000255" key="1">
    <source>
        <dbReference type="HAMAP-Rule" id="MF_00789"/>
    </source>
</evidence>
<accession>Q9KQZ4</accession>
<gene>
    <name type="ordered locus">VC_1853</name>
</gene>
<name>Y1853_VIBCH</name>
<dbReference type="EMBL" id="AE003852">
    <property type="protein sequence ID" value="AAF95001.1"/>
    <property type="molecule type" value="Genomic_DNA"/>
</dbReference>
<dbReference type="PIR" id="F82150">
    <property type="entry name" value="F82150"/>
</dbReference>
<dbReference type="RefSeq" id="NP_231487.1">
    <property type="nucleotide sequence ID" value="NC_002505.1"/>
</dbReference>
<dbReference type="RefSeq" id="WP_000773947.1">
    <property type="nucleotide sequence ID" value="NZ_LT906614.1"/>
</dbReference>
<dbReference type="STRING" id="243277.VC_1853"/>
<dbReference type="DNASU" id="2613607"/>
<dbReference type="EnsemblBacteria" id="AAF95001">
    <property type="protein sequence ID" value="AAF95001"/>
    <property type="gene ID" value="VC_1853"/>
</dbReference>
<dbReference type="KEGG" id="vch:VC_1853"/>
<dbReference type="PATRIC" id="fig|243277.26.peg.1769"/>
<dbReference type="eggNOG" id="COG3110">
    <property type="taxonomic scope" value="Bacteria"/>
</dbReference>
<dbReference type="HOGENOM" id="CLU_073782_1_0_6"/>
<dbReference type="Proteomes" id="UP000000584">
    <property type="component" value="Chromosome 1"/>
</dbReference>
<dbReference type="HAMAP" id="MF_00789">
    <property type="entry name" value="UPF0319"/>
    <property type="match status" value="1"/>
</dbReference>
<dbReference type="InterPro" id="IPR018635">
    <property type="entry name" value="UPF0319"/>
</dbReference>
<dbReference type="PANTHER" id="PTHR38108">
    <property type="entry name" value="UPF0319 PROTEIN YCCT"/>
    <property type="match status" value="1"/>
</dbReference>
<dbReference type="PANTHER" id="PTHR38108:SF1">
    <property type="entry name" value="UPF0319 PROTEIN YCCT"/>
    <property type="match status" value="1"/>
</dbReference>
<dbReference type="Pfam" id="PF09829">
    <property type="entry name" value="DUF2057"/>
    <property type="match status" value="1"/>
</dbReference>
<sequence>MKLNPLILGLLLSFSAGHSLADVVLKVPENIDLLSVNMQKPKSEGGLFGDKTIMLKDGTNQIVFRYIPTFDDGDDVKKVYSDTIIAKFESENATLHFKIPSYRNIKEANEKIQTMEWQLVDEKGQSVALVEDKLLNPGVQWGRNYSQEATEYNQNGGVAAIGYLKVVTNEAQLSENTTQVIMSEASQPLEVVGSSNNLTQLQLWYSKASKEERKAFKKWMVDQE</sequence>
<proteinExistence type="inferred from homology"/>
<keyword id="KW-1185">Reference proteome</keyword>
<keyword id="KW-0732">Signal</keyword>
<protein>
    <recommendedName>
        <fullName evidence="1">UPF0319 protein VC_1853</fullName>
    </recommendedName>
</protein>
<feature type="signal peptide" evidence="1">
    <location>
        <begin position="1"/>
        <end position="21"/>
    </location>
</feature>
<feature type="chain" id="PRO_0000036306" description="UPF0319 protein VC_1853">
    <location>
        <begin position="22"/>
        <end position="224"/>
    </location>
</feature>
<reference key="1">
    <citation type="journal article" date="2000" name="Nature">
        <title>DNA sequence of both chromosomes of the cholera pathogen Vibrio cholerae.</title>
        <authorList>
            <person name="Heidelberg J.F."/>
            <person name="Eisen J.A."/>
            <person name="Nelson W.C."/>
            <person name="Clayton R.A."/>
            <person name="Gwinn M.L."/>
            <person name="Dodson R.J."/>
            <person name="Haft D.H."/>
            <person name="Hickey E.K."/>
            <person name="Peterson J.D."/>
            <person name="Umayam L.A."/>
            <person name="Gill S.R."/>
            <person name="Nelson K.E."/>
            <person name="Read T.D."/>
            <person name="Tettelin H."/>
            <person name="Richardson D.L."/>
            <person name="Ermolaeva M.D."/>
            <person name="Vamathevan J.J."/>
            <person name="Bass S."/>
            <person name="Qin H."/>
            <person name="Dragoi I."/>
            <person name="Sellers P."/>
            <person name="McDonald L.A."/>
            <person name="Utterback T.R."/>
            <person name="Fleischmann R.D."/>
            <person name="Nierman W.C."/>
            <person name="White O."/>
            <person name="Salzberg S.L."/>
            <person name="Smith H.O."/>
            <person name="Colwell R.R."/>
            <person name="Mekalanos J.J."/>
            <person name="Venter J.C."/>
            <person name="Fraser C.M."/>
        </authorList>
    </citation>
    <scope>NUCLEOTIDE SEQUENCE [LARGE SCALE GENOMIC DNA]</scope>
    <source>
        <strain>ATCC 39315 / El Tor Inaba N16961</strain>
    </source>
</reference>
<organism>
    <name type="scientific">Vibrio cholerae serotype O1 (strain ATCC 39315 / El Tor Inaba N16961)</name>
    <dbReference type="NCBI Taxonomy" id="243277"/>
    <lineage>
        <taxon>Bacteria</taxon>
        <taxon>Pseudomonadati</taxon>
        <taxon>Pseudomonadota</taxon>
        <taxon>Gammaproteobacteria</taxon>
        <taxon>Vibrionales</taxon>
        <taxon>Vibrionaceae</taxon>
        <taxon>Vibrio</taxon>
    </lineage>
</organism>
<comment type="similarity">
    <text evidence="1">Belongs to the UPF0319 family.</text>
</comment>